<dbReference type="SMR" id="P0DW97"/>
<dbReference type="GO" id="GO:0005615">
    <property type="term" value="C:extracellular space"/>
    <property type="evidence" value="ECO:0007669"/>
    <property type="project" value="TreeGrafter"/>
</dbReference>
<dbReference type="GO" id="GO:0016020">
    <property type="term" value="C:membrane"/>
    <property type="evidence" value="ECO:0007669"/>
    <property type="project" value="InterPro"/>
</dbReference>
<dbReference type="GO" id="GO:0042056">
    <property type="term" value="F:chemoattractant activity"/>
    <property type="evidence" value="ECO:0007669"/>
    <property type="project" value="TreeGrafter"/>
</dbReference>
<dbReference type="GO" id="GO:0008083">
    <property type="term" value="F:growth factor activity"/>
    <property type="evidence" value="ECO:0007669"/>
    <property type="project" value="UniProtKB-KW"/>
</dbReference>
<dbReference type="GO" id="GO:0090729">
    <property type="term" value="F:toxin activity"/>
    <property type="evidence" value="ECO:0007669"/>
    <property type="project" value="UniProtKB-KW"/>
</dbReference>
<dbReference type="GO" id="GO:0005172">
    <property type="term" value="F:vascular endothelial growth factor receptor binding"/>
    <property type="evidence" value="ECO:0007669"/>
    <property type="project" value="TreeGrafter"/>
</dbReference>
<dbReference type="GO" id="GO:0050930">
    <property type="term" value="P:induction of positive chemotaxis"/>
    <property type="evidence" value="ECO:0007669"/>
    <property type="project" value="TreeGrafter"/>
</dbReference>
<dbReference type="GO" id="GO:0045766">
    <property type="term" value="P:positive regulation of angiogenesis"/>
    <property type="evidence" value="ECO:0007669"/>
    <property type="project" value="TreeGrafter"/>
</dbReference>
<dbReference type="GO" id="GO:0001938">
    <property type="term" value="P:positive regulation of endothelial cell proliferation"/>
    <property type="evidence" value="ECO:0007669"/>
    <property type="project" value="TreeGrafter"/>
</dbReference>
<dbReference type="GO" id="GO:0060754">
    <property type="term" value="P:positive regulation of mast cell chemotaxis"/>
    <property type="evidence" value="ECO:0007669"/>
    <property type="project" value="TreeGrafter"/>
</dbReference>
<dbReference type="GO" id="GO:0001666">
    <property type="term" value="P:response to hypoxia"/>
    <property type="evidence" value="ECO:0007669"/>
    <property type="project" value="TreeGrafter"/>
</dbReference>
<dbReference type="GO" id="GO:0002040">
    <property type="term" value="P:sprouting angiogenesis"/>
    <property type="evidence" value="ECO:0007669"/>
    <property type="project" value="TreeGrafter"/>
</dbReference>
<dbReference type="GO" id="GO:0048010">
    <property type="term" value="P:vascular endothelial growth factor receptor signaling pathway"/>
    <property type="evidence" value="ECO:0007669"/>
    <property type="project" value="TreeGrafter"/>
</dbReference>
<dbReference type="GO" id="GO:0038084">
    <property type="term" value="P:vascular endothelial growth factor signaling pathway"/>
    <property type="evidence" value="ECO:0007669"/>
    <property type="project" value="TreeGrafter"/>
</dbReference>
<dbReference type="CDD" id="cd00135">
    <property type="entry name" value="PDGF"/>
    <property type="match status" value="1"/>
</dbReference>
<dbReference type="FunFam" id="2.10.90.10:FF:000030">
    <property type="entry name" value="Vascular endothelial growth factor B"/>
    <property type="match status" value="1"/>
</dbReference>
<dbReference type="Gene3D" id="2.10.90.10">
    <property type="entry name" value="Cystine-knot cytokines"/>
    <property type="match status" value="1"/>
</dbReference>
<dbReference type="InterPro" id="IPR029034">
    <property type="entry name" value="Cystine-knot_cytokine"/>
</dbReference>
<dbReference type="InterPro" id="IPR023581">
    <property type="entry name" value="PD_growth_factor_CS"/>
</dbReference>
<dbReference type="InterPro" id="IPR000072">
    <property type="entry name" value="PDGF/VEGF_dom"/>
</dbReference>
<dbReference type="InterPro" id="IPR050507">
    <property type="entry name" value="PDGF/VEGF_growth_factor"/>
</dbReference>
<dbReference type="PANTHER" id="PTHR12025">
    <property type="entry name" value="VASCULAR ENDOTHELIAL GROWTH FACTOR"/>
    <property type="match status" value="1"/>
</dbReference>
<dbReference type="PANTHER" id="PTHR12025:SF5">
    <property type="entry name" value="VASCULAR ENDOTHELIAL GROWTH FACTOR A, LONG FORM"/>
    <property type="match status" value="1"/>
</dbReference>
<dbReference type="Pfam" id="PF00341">
    <property type="entry name" value="PDGF"/>
    <property type="match status" value="1"/>
</dbReference>
<dbReference type="SMART" id="SM00141">
    <property type="entry name" value="PDGF"/>
    <property type="match status" value="1"/>
</dbReference>
<dbReference type="SUPFAM" id="SSF57501">
    <property type="entry name" value="Cystine-knot cytokines"/>
    <property type="match status" value="1"/>
</dbReference>
<dbReference type="PROSITE" id="PS00249">
    <property type="entry name" value="PDGF_1"/>
    <property type="match status" value="1"/>
</dbReference>
<dbReference type="PROSITE" id="PS50278">
    <property type="entry name" value="PDGF_2"/>
    <property type="match status" value="1"/>
</dbReference>
<sequence length="110" mass="12590">QVRPFLDVYQRSACQARETLVSILQEYPDEISDIFRPSCVAVLRCSGCCTDESLKCTPVGKHTVDMQIMRVNPRTQSSKMEVMKFTEHTACECRPRRKQGEPDGPKEKPR</sequence>
<name>TXVE_DABPA</name>
<keyword id="KW-0903">Direct protein sequencing</keyword>
<keyword id="KW-1015">Disulfide bond</keyword>
<keyword id="KW-0339">Growth factor</keyword>
<keyword id="KW-0873">Pyrrolidone carboxylic acid</keyword>
<keyword id="KW-0964">Secreted</keyword>
<keyword id="KW-0800">Toxin</keyword>
<organism>
    <name type="scientific">Daboia palaestinae</name>
    <name type="common">Palestine viper</name>
    <name type="synonym">Vipera palaestinae</name>
    <dbReference type="NCBI Taxonomy" id="1170828"/>
    <lineage>
        <taxon>Eukaryota</taxon>
        <taxon>Metazoa</taxon>
        <taxon>Chordata</taxon>
        <taxon>Craniata</taxon>
        <taxon>Vertebrata</taxon>
        <taxon>Euteleostomi</taxon>
        <taxon>Lepidosauria</taxon>
        <taxon>Squamata</taxon>
        <taxon>Bifurcata</taxon>
        <taxon>Unidentata</taxon>
        <taxon>Episquamata</taxon>
        <taxon>Toxicofera</taxon>
        <taxon>Serpentes</taxon>
        <taxon>Colubroidea</taxon>
        <taxon>Viperidae</taxon>
        <taxon>Viperinae</taxon>
        <taxon>Daboia</taxon>
    </lineage>
</organism>
<proteinExistence type="evidence at protein level"/>
<accession>P0DW97</accession>
<reference key="1">
    <citation type="journal article" date="2007" name="Growth Factors">
        <title>VEGF-related protein isolated from Vipera palestinae venom, promotes angiogenesis.</title>
        <authorList>
            <person name="Brown M.C."/>
            <person name="Calvete J.J."/>
            <person name="Staniszewska I."/>
            <person name="Walsh E.M."/>
            <person name="Perez-Liz G."/>
            <person name="Del Valle L."/>
            <person name="Lazarovici P."/>
            <person name="Marcinkiewicz C."/>
        </authorList>
    </citation>
    <scope>PROTEIN SEQUENCE</scope>
    <scope>FUNCTION</scope>
    <scope>SUBCELLULAR LOCATION</scope>
    <scope>PYROGLUTAMATE FORMATION AT GLN-1</scope>
    <source>
        <tissue>Venom</tissue>
    </source>
</reference>
<evidence type="ECO:0000250" key="1">
    <source>
        <dbReference type="UniProtKB" id="P67863"/>
    </source>
</evidence>
<evidence type="ECO:0000250" key="2">
    <source>
        <dbReference type="UniProtKB" id="P83942"/>
    </source>
</evidence>
<evidence type="ECO:0000269" key="3">
    <source>
    </source>
</evidence>
<evidence type="ECO:0000303" key="4">
    <source>
    </source>
</evidence>
<evidence type="ECO:0000305" key="5"/>
<evidence type="ECO:0000305" key="6">
    <source>
    </source>
</evidence>
<comment type="function">
    <text evidence="2 3">Snake venom VEGFs that may contribute to venom dispersion and prey subjugation by inducing vascular permeability and hypotension. This protein potently stimulates dermal human microvascular endothelial cell (dHMVEC) proliferation in a VEGFR-2 dependent manner (PubMed:17852405). This stimulatory effect is correlated with activation of the MAPK Erk1/2 signaling pathway (PubMed:17852405). It also appears to be a chemoattractant for migration of these cells and stimulates their radial migration in a collagen gel (PubMed:17852405). In vivo, it induces angiogenesis in a Japanese quail assay (PubMed:17852405). This pro-angiogenic effect may also be related to its interaction with VEGFR-2 (PubMed:17852405). In addition, it may induce an increase in capillary permeability after intradermal injection, as well as a drastic hypotensive effect after intravenous injection (By similarity). The hypotension is mediated by nitric oxide (NO), which is produced by VEGF-activated endothelium NO synthase (By similarity).</text>
</comment>
<comment type="subunit">
    <text evidence="2 6">Homodimer; disulfide-linked.</text>
</comment>
<comment type="subcellular location">
    <subcellularLocation>
        <location evidence="3">Secreted</location>
    </subcellularLocation>
</comment>
<comment type="tissue specificity">
    <text evidence="6">Expressed by the venom gland.</text>
</comment>
<comment type="similarity">
    <text evidence="5">Belongs to the PDGF/VEGF growth factor family. Snake venom VEGF subfamily.</text>
</comment>
<protein>
    <recommendedName>
        <fullName>Snake venom vascular endothelial growth factor toxin</fullName>
        <shortName>svVEGF</shortName>
    </recommendedName>
    <alternativeName>
        <fullName evidence="4">VEGF-F</fullName>
    </alternativeName>
    <alternativeName>
        <fullName evidence="4">VpVEGF</fullName>
    </alternativeName>
</protein>
<feature type="chain" id="PRO_0000456729" description="Snake venom vascular endothelial growth factor toxin">
    <location>
        <begin position="1"/>
        <end position="110"/>
    </location>
</feature>
<feature type="modified residue" description="Pyrrolidone carboxylic acid" evidence="3">
    <location>
        <position position="1"/>
    </location>
</feature>
<feature type="disulfide bond" evidence="1">
    <location>
        <begin position="14"/>
        <end position="56"/>
    </location>
</feature>
<feature type="disulfide bond" description="Interchain (with C-48)" evidence="1">
    <location>
        <position position="39"/>
    </location>
</feature>
<feature type="disulfide bond" evidence="1">
    <location>
        <begin position="45"/>
        <end position="91"/>
    </location>
</feature>
<feature type="disulfide bond" description="Interchain (with C-39)" evidence="1">
    <location>
        <position position="48"/>
    </location>
</feature>
<feature type="disulfide bond" evidence="1">
    <location>
        <begin position="49"/>
        <end position="93"/>
    </location>
</feature>
<feature type="unsure residue" description="Assigned by comparison with homologs" evidence="5">
    <location>
        <position position="1"/>
    </location>
</feature>